<keyword id="KW-0903">Direct protein sequencing</keyword>
<keyword id="KW-0484">Methanogenesis</keyword>
<keyword id="KW-0489">Methyltransferase</keyword>
<keyword id="KW-0669">Pyrrolysine</keyword>
<keyword id="KW-0808">Transferase</keyword>
<feature type="initiator methionine" description="Removed" evidence="2">
    <location>
        <position position="1"/>
    </location>
</feature>
<feature type="chain" id="PRO_0000216561" description="Dimethylamine methyltransferase MtbB1">
    <location>
        <begin position="2"/>
        <end position="467"/>
    </location>
</feature>
<feature type="non-standard amino acid" description="Pyrrolysine" evidence="1">
    <location>
        <position position="356"/>
    </location>
</feature>
<feature type="sequence conflict" description="In Ref. 2; AA sequence." evidence="3" ref="2">
    <original>Y</original>
    <variation>K</variation>
    <location>
        <position position="16"/>
    </location>
</feature>
<accession>P0C0W5</accession>
<name>MTBB1_METBF</name>
<gene>
    <name type="primary">mtbB1</name>
    <name type="ordered locus">Mbar_A1506</name>
</gene>
<comment type="function">
    <text evidence="2">Catalyzes the transfer of a methyl group from dimethylamine to the corrinoid cofactor of MtbC.</text>
</comment>
<comment type="catalytic activity">
    <reaction evidence="2">
        <text>Co(I)-[dimethylamine-specific corrinoid protein] + dimethylamine + H(+) = methyl-Co(III)-[dimethylamine-specific corrinoid protein] + methylamine</text>
        <dbReference type="Rhea" id="RHEA:41175"/>
        <dbReference type="Rhea" id="RHEA-COMP:11122"/>
        <dbReference type="Rhea" id="RHEA-COMP:11123"/>
        <dbReference type="ChEBI" id="CHEBI:15378"/>
        <dbReference type="ChEBI" id="CHEBI:58040"/>
        <dbReference type="ChEBI" id="CHEBI:59338"/>
        <dbReference type="ChEBI" id="CHEBI:85033"/>
        <dbReference type="ChEBI" id="CHEBI:85035"/>
        <dbReference type="EC" id="2.1.1.249"/>
    </reaction>
</comment>
<comment type="biophysicochemical properties">
    <kinetics>
        <KM evidence="2">0.45 mM for dimethylamine</KM>
        <KM evidence="2">4.5 mM for monomethylamine</KM>
    </kinetics>
</comment>
<comment type="pathway">
    <text>One-carbon metabolism; methanogenesis from dimethylamine.</text>
</comment>
<comment type="similarity">
    <text evidence="3">Belongs to the dimethylamine methyltransferase family.</text>
</comment>
<organism>
    <name type="scientific">Methanosarcina barkeri (strain Fusaro / DSM 804)</name>
    <dbReference type="NCBI Taxonomy" id="269797"/>
    <lineage>
        <taxon>Archaea</taxon>
        <taxon>Methanobacteriati</taxon>
        <taxon>Methanobacteriota</taxon>
        <taxon>Stenosarchaea group</taxon>
        <taxon>Methanomicrobia</taxon>
        <taxon>Methanosarcinales</taxon>
        <taxon>Methanosarcinaceae</taxon>
        <taxon>Methanosarcina</taxon>
    </lineage>
</organism>
<proteinExistence type="evidence at protein level"/>
<sequence length="467" mass="50311">MATEYALRMGDGKRIYLTKEKIIAEIEDGTANAADLGEIPALNANEMEKLAEILMMPGKTVSVEQGMEVPVTHDIGTIRLDGDQGNSGVGIPSSRLVGCMTHERAFGADTMELGHIDYSFKPVKPVVSNECQAMEVCQQNMIIPLFYGAMPNMGLYYTPDGPFENPGDLMKAFKIPEAWESMEHAAEHLTRDTVWVMQKLFASGADGVNFDTTGAAGDGDMYGTLHAIEALRKEFPDMYIEAGMAGECVLGMHGNLQYDGVTLAGLWPHQQAPLVAKAGANVFGPVCNTNTSKTSAWNLARAVTFMKAAVEASPIPCHVDMGMGVGGIPMLETPPIDAVTRASKAMVEIAGVDGIOIGVGDPMGMPIAHIMASGMTGMRAAGDLVARMEFSKNMRIGEAKEYVAKKLGVDQMDLVDEHVMRELREELDIGIITSVPGAAKGIAAKMNIEKLLDIKINSCNLFRKQIA</sequence>
<dbReference type="EC" id="2.1.1.249"/>
<dbReference type="EMBL" id="CP000099">
    <property type="status" value="NOT_ANNOTATED_CDS"/>
    <property type="molecule type" value="Genomic_DNA"/>
</dbReference>
<dbReference type="SABIO-RK" id="P0C0W5"/>
<dbReference type="UniPathway" id="UPA00644"/>
<dbReference type="GO" id="GO:0043791">
    <property type="term" value="F:dimethylamine methyltransferase activity"/>
    <property type="evidence" value="ECO:0007669"/>
    <property type="project" value="UniProtKB-EC"/>
</dbReference>
<dbReference type="GO" id="GO:0015948">
    <property type="term" value="P:methanogenesis"/>
    <property type="evidence" value="ECO:0007669"/>
    <property type="project" value="UniProtKB-KW"/>
</dbReference>
<dbReference type="GO" id="GO:0032259">
    <property type="term" value="P:methylation"/>
    <property type="evidence" value="ECO:0007669"/>
    <property type="project" value="UniProtKB-KW"/>
</dbReference>
<dbReference type="InterPro" id="IPR012653">
    <property type="entry name" value="Dimeth_MeTrfase_MtbB"/>
</dbReference>
<dbReference type="NCBIfam" id="TIGR02368">
    <property type="entry name" value="dimeth_PyL"/>
    <property type="match status" value="1"/>
</dbReference>
<dbReference type="Pfam" id="PF09505">
    <property type="entry name" value="Dimeth_Pyl"/>
    <property type="match status" value="1"/>
</dbReference>
<evidence type="ECO:0000250" key="1"/>
<evidence type="ECO:0000269" key="2">
    <source>
    </source>
</evidence>
<evidence type="ECO:0000305" key="3"/>
<reference key="1">
    <citation type="journal article" date="2006" name="J. Bacteriol.">
        <title>The Methanosarcina barkeri genome: comparative analysis with Methanosarcina acetivorans and Methanosarcina mazei reveals extensive rearrangement within methanosarcinal genomes.</title>
        <authorList>
            <person name="Maeder D.L."/>
            <person name="Anderson I."/>
            <person name="Brettin T.S."/>
            <person name="Bruce D.C."/>
            <person name="Gilna P."/>
            <person name="Han C.S."/>
            <person name="Lapidus A."/>
            <person name="Metcalf W.W."/>
            <person name="Saunders E."/>
            <person name="Tapia R."/>
            <person name="Sowers K.R."/>
        </authorList>
    </citation>
    <scope>NUCLEOTIDE SEQUENCE [LARGE SCALE GENOMIC DNA]</scope>
    <source>
        <strain>Fusaro / DSM 804</strain>
    </source>
</reference>
<reference key="2">
    <citation type="journal article" date="1998" name="Eur. J. Biochem.">
        <title>Purification and characterization of dimethylamine:5-hydroxybenzimidazolylcobamide methyltransferase from Methanosarcina barkeri Fusaro.</title>
        <authorList>
            <person name="Wassenaar R.W."/>
            <person name="Keltjens J.T."/>
            <person name="van der Drift C."/>
            <person name="Vogels G.D."/>
        </authorList>
    </citation>
    <scope>PROTEIN SEQUENCE OF 2-17</scope>
    <scope>FUNCTION</scope>
    <scope>CATALYTIC ACTIVITY</scope>
    <scope>BIOPHYSICOCHEMICAL PROPERTIES</scope>
    <source>
        <strain>Fusaro / DSM 804</strain>
    </source>
</reference>
<protein>
    <recommendedName>
        <fullName>Dimethylamine methyltransferase MtbB1</fullName>
        <shortName>DMA methyltransferase 1</shortName>
        <shortName>DMAMT 1</shortName>
        <ecNumber>2.1.1.249</ecNumber>
    </recommendedName>
    <alternativeName>
        <fullName>Dimethylamine--corrinoid protein methyltransferase 1</fullName>
    </alternativeName>
</protein>